<sequence>MAEDDIKIVMFCCNWCSYGGADTAGTARMQYPTNIRVIRVMCSGRIEPQFVFKAFREGADGVLVTGCHHGDCHYDAGNYKLDRRMRLIYKLADELGIGRERIHHDWISASEGEKFAETVKMMVDRIRALGPSPIKKQLAEA</sequence>
<accession>P60238</accession>
<accession>D9PY00</accession>
<name>MVHD_METTM</name>
<gene>
    <name type="primary">mvhD</name>
    <name type="ordered locus">MTBMA_c15190</name>
</gene>
<comment type="function">
    <text evidence="1">Part of a complex that provides reducing equivalents for heterodisulfide reductase. MvhD may form the contact site to heterodisulfide reductase.</text>
</comment>
<comment type="cofactor">
    <cofactor evidence="1">
        <name>[2Fe-2S] cluster</name>
        <dbReference type="ChEBI" id="CHEBI:190135"/>
    </cofactor>
    <text evidence="1">Binds 1 [2Fe-2S] cluster.</text>
</comment>
<comment type="subunit">
    <text evidence="2">The F420-non-reducing hydrogenase is composed of three subunits; MvhA, MvhD and MvhG. It forms a complex with the heterodisulfide reductase (hdr).</text>
</comment>
<comment type="similarity">
    <text evidence="3">Belongs to the MvhD/VhuD family.</text>
</comment>
<proteinExistence type="evidence at protein level"/>
<organism>
    <name type="scientific">Methanothermobacter marburgensis (strain ATCC BAA-927 / DSM 2133 / JCM 14651 / NBRC 100331 / OCM 82 / Marburg)</name>
    <name type="common">Methanobacterium thermoautotrophicum</name>
    <dbReference type="NCBI Taxonomy" id="79929"/>
    <lineage>
        <taxon>Archaea</taxon>
        <taxon>Methanobacteriati</taxon>
        <taxon>Methanobacteriota</taxon>
        <taxon>Methanomada group</taxon>
        <taxon>Methanobacteria</taxon>
        <taxon>Methanobacteriales</taxon>
        <taxon>Methanobacteriaceae</taxon>
        <taxon>Methanothermobacter</taxon>
    </lineage>
</organism>
<reference key="1">
    <citation type="journal article" date="2010" name="J. Bacteriol.">
        <title>Complete genome sequence of Methanothermobacter marburgensis, a methanoarchaeon model organism.</title>
        <authorList>
            <person name="Liesegang H."/>
            <person name="Kaster A.K."/>
            <person name="Wiezer A."/>
            <person name="Goenrich M."/>
            <person name="Wollherr A."/>
            <person name="Seedorf H."/>
            <person name="Gottschalk G."/>
            <person name="Thauer R.K."/>
        </authorList>
    </citation>
    <scope>NUCLEOTIDE SEQUENCE [LARGE SCALE GENOMIC DNA]</scope>
    <source>
        <strain>ATCC BAA-927 / DSM 2133 / JCM 14651 / NBRC 100331 / OCM 82 / Marburg</strain>
    </source>
</reference>
<reference key="2">
    <citation type="journal article" date="1994" name="Eur. J. Biochem.">
        <title>H2: heterodisulfide oxidoreductase complex from Methanobacterium thermoautotrophicum. Composition and properties.</title>
        <authorList>
            <person name="Setzke E."/>
            <person name="Hedderich R."/>
            <person name="Heiden S."/>
            <person name="Thauer R.K."/>
        </authorList>
    </citation>
    <scope>PROTEIN SEQUENCE OF 2-12</scope>
    <scope>SUBUNIT</scope>
    <scope>ASSOCIATION WITH HETERODISULFIDE REDUCTASE</scope>
    <source>
        <strain>ATCC BAA-927 / DSM 2133 / JCM 14651 / NBRC 100331 / OCM 82 / Marburg</strain>
    </source>
</reference>
<reference key="3">
    <citation type="journal article" date="2003" name="Arch. Microbiol.">
        <title>Physiological role of the F420-non-reducing hydrogenase (Mvh) from Methanothermobacter marburgensis.</title>
        <authorList>
            <person name="Stojanowic A."/>
            <person name="Mander G.J."/>
            <person name="Duin E.C."/>
            <person name="Hedderich R."/>
        </authorList>
    </citation>
    <scope>FUNCTION</scope>
    <scope>COFACTOR</scope>
    <scope>ASSOCIATION WITH HETERODISULFIDE REDUCTASE</scope>
    <source>
        <strain>ATCC BAA-927 / DSM 2133 / JCM 14651 / NBRC 100331 / OCM 82 / Marburg</strain>
    </source>
</reference>
<dbReference type="EC" id="1.12.99.-"/>
<dbReference type="EMBL" id="CP001710">
    <property type="protein sequence ID" value="ADL59098.1"/>
    <property type="molecule type" value="Genomic_DNA"/>
</dbReference>
<dbReference type="RefSeq" id="WP_013296309.1">
    <property type="nucleotide sequence ID" value="NC_014408.1"/>
</dbReference>
<dbReference type="SMR" id="P60238"/>
<dbReference type="DIP" id="DIP-59604N"/>
<dbReference type="IntAct" id="P60238">
    <property type="interactions" value="1"/>
</dbReference>
<dbReference type="STRING" id="79929.MTBMA_c15190"/>
<dbReference type="TCDB" id="3.D.7.2.4">
    <property type="family name" value="the h2:heterodisulfide oxidoreductase (hho) family"/>
</dbReference>
<dbReference type="PaxDb" id="79929-MTBMA_c15190"/>
<dbReference type="GeneID" id="92394127"/>
<dbReference type="GeneID" id="9705228"/>
<dbReference type="KEGG" id="mmg:MTBMA_c15190"/>
<dbReference type="PATRIC" id="fig|79929.8.peg.1472"/>
<dbReference type="HOGENOM" id="CLU_095272_2_0_2"/>
<dbReference type="OrthoDB" id="371828at2157"/>
<dbReference type="Proteomes" id="UP000000345">
    <property type="component" value="Chromosome"/>
</dbReference>
<dbReference type="GO" id="GO:0051537">
    <property type="term" value="F:2 iron, 2 sulfur cluster binding"/>
    <property type="evidence" value="ECO:0007669"/>
    <property type="project" value="UniProtKB-KW"/>
</dbReference>
<dbReference type="GO" id="GO:0046872">
    <property type="term" value="F:metal ion binding"/>
    <property type="evidence" value="ECO:0007669"/>
    <property type="project" value="UniProtKB-KW"/>
</dbReference>
<dbReference type="GO" id="GO:0016491">
    <property type="term" value="F:oxidoreductase activity"/>
    <property type="evidence" value="ECO:0007669"/>
    <property type="project" value="UniProtKB-KW"/>
</dbReference>
<dbReference type="InterPro" id="IPR003813">
    <property type="entry name" value="MvhD/FlpD"/>
</dbReference>
<dbReference type="Pfam" id="PF02662">
    <property type="entry name" value="FlpD"/>
    <property type="match status" value="1"/>
</dbReference>
<feature type="initiator methionine" description="Removed" evidence="2">
    <location>
        <position position="1"/>
    </location>
</feature>
<feature type="chain" id="PRO_0000218275" description="F420-non-reducing hydrogenase iron-sulfur subunit D">
    <location>
        <begin position="2"/>
        <end position="141"/>
    </location>
</feature>
<feature type="sequence conflict" description="In Ref. 2; AA sequence." evidence="3" ref="2">
    <original>K</original>
    <variation>G</variation>
    <location>
        <position position="7"/>
    </location>
</feature>
<feature type="sequence conflict" description="In Ref. 2; AA sequence." evidence="3" ref="2">
    <original>MFC</original>
    <variation>GFN</variation>
    <location>
        <begin position="10"/>
        <end position="12"/>
    </location>
</feature>
<keyword id="KW-0001">2Fe-2S</keyword>
<keyword id="KW-0903">Direct protein sequencing</keyword>
<keyword id="KW-0249">Electron transport</keyword>
<keyword id="KW-0408">Iron</keyword>
<keyword id="KW-0411">Iron-sulfur</keyword>
<keyword id="KW-0479">Metal-binding</keyword>
<keyword id="KW-0560">Oxidoreductase</keyword>
<keyword id="KW-0813">Transport</keyword>
<evidence type="ECO:0000269" key="1">
    <source>
    </source>
</evidence>
<evidence type="ECO:0000269" key="2">
    <source>
    </source>
</evidence>
<evidence type="ECO:0000305" key="3"/>
<protein>
    <recommendedName>
        <fullName>F420-non-reducing hydrogenase iron-sulfur subunit D</fullName>
        <ecNumber>1.12.99.-</ecNumber>
    </recommendedName>
    <alternativeName>
        <fullName>Methyl viologen-reducing hydrogenase subunit delta</fullName>
        <shortName>MVH subunit D</shortName>
    </alternativeName>
</protein>